<protein>
    <recommendedName>
        <fullName>Uncharacterized protein ycf68</fullName>
    </recommendedName>
    <alternativeName>
        <fullName>ORF133</fullName>
    </alternativeName>
</protein>
<dbReference type="EMBL" id="AP006728">
    <property type="protein sequence ID" value="BAD26835.1"/>
    <property type="molecule type" value="Genomic_DNA"/>
</dbReference>
<dbReference type="EMBL" id="AP006728">
    <property type="protein sequence ID" value="BAD26857.1"/>
    <property type="molecule type" value="Genomic_DNA"/>
</dbReference>
<dbReference type="RefSeq" id="YP_052805.1">
    <property type="nucleotide sequence ID" value="NC_005973.1"/>
</dbReference>
<dbReference type="RefSeq" id="YP_052827.1">
    <property type="nucleotide sequence ID" value="NC_005973.1"/>
</dbReference>
<dbReference type="STRING" id="4536.Q6ENB7"/>
<dbReference type="Proteomes" id="UP000006591">
    <property type="component" value="Chloroplast"/>
</dbReference>
<dbReference type="GO" id="GO:0009507">
    <property type="term" value="C:chloroplast"/>
    <property type="evidence" value="ECO:0007669"/>
    <property type="project" value="UniProtKB-SubCell"/>
</dbReference>
<dbReference type="GO" id="GO:0009536">
    <property type="term" value="C:plastid"/>
    <property type="evidence" value="ECO:0000305"/>
    <property type="project" value="Gramene"/>
</dbReference>
<dbReference type="InterPro" id="IPR022546">
    <property type="entry name" value="Uncharacterised_Ycf68"/>
</dbReference>
<dbReference type="PANTHER" id="PTHR34890">
    <property type="entry name" value="ORF16-LACZ FUSION PROTEIN-RELATED"/>
    <property type="match status" value="1"/>
</dbReference>
<dbReference type="Pfam" id="PF10839">
    <property type="entry name" value="DUF2647"/>
    <property type="match status" value="1"/>
</dbReference>
<comment type="subcellular location">
    <subcellularLocation>
        <location>Plastid</location>
        <location>Chloroplast</location>
    </subcellularLocation>
</comment>
<comment type="similarity">
    <text evidence="1">Belongs to the ycf68 family.</text>
</comment>
<accession>Q6ENB7</accession>
<sequence length="133" mass="14576">MAYSSCLNRSLKPNKLLLRRIDGAIQVRSHVDLTFYSLVGSGRSGGGTTAPLFSRIHTSLISVWRAISRAQVEVRPQWENGAPNNASSQTKNYEITLSFWGDGGIVPFEPFFHAFPGGLEKAAINRTSLILPS</sequence>
<reference key="1">
    <citation type="journal article" date="2004" name="Gene">
        <title>The complete nucleotide sequence of wild rice (Oryza nivara) chloroplast genome: first genome wide comparative sequence analysis of wild and cultivated rice.</title>
        <authorList>
            <person name="Masood M.S."/>
            <person name="Nishikawa T."/>
            <person name="Fukuoka S."/>
            <person name="Njenga P.K."/>
            <person name="Tsudzuki T."/>
            <person name="Kadowaki K."/>
        </authorList>
    </citation>
    <scope>NUCLEOTIDE SEQUENCE [LARGE SCALE GENOMIC DNA]</scope>
    <source>
        <strain evidence="2">cv. SL10</strain>
    </source>
</reference>
<evidence type="ECO:0000305" key="1"/>
<evidence type="ECO:0000312" key="2">
    <source>
        <dbReference type="Proteomes" id="UP000006591"/>
    </source>
</evidence>
<proteinExistence type="inferred from homology"/>
<feature type="chain" id="PRO_0000217396" description="Uncharacterized protein ycf68">
    <location>
        <begin position="1"/>
        <end position="133"/>
    </location>
</feature>
<organism>
    <name type="scientific">Oryza nivara</name>
    <name type="common">Indian wild rice</name>
    <name type="synonym">Oryza sativa f. spontanea</name>
    <dbReference type="NCBI Taxonomy" id="4536"/>
    <lineage>
        <taxon>Eukaryota</taxon>
        <taxon>Viridiplantae</taxon>
        <taxon>Streptophyta</taxon>
        <taxon>Embryophyta</taxon>
        <taxon>Tracheophyta</taxon>
        <taxon>Spermatophyta</taxon>
        <taxon>Magnoliopsida</taxon>
        <taxon>Liliopsida</taxon>
        <taxon>Poales</taxon>
        <taxon>Poaceae</taxon>
        <taxon>BOP clade</taxon>
        <taxon>Oryzoideae</taxon>
        <taxon>Oryzeae</taxon>
        <taxon>Oryzinae</taxon>
        <taxon>Oryza</taxon>
    </lineage>
</organism>
<gene>
    <name type="primary">ycf68-1</name>
</gene>
<gene>
    <name type="primary">ycf68-2</name>
</gene>
<geneLocation type="chloroplast"/>
<keyword id="KW-0150">Chloroplast</keyword>
<keyword id="KW-0934">Plastid</keyword>
<keyword id="KW-1185">Reference proteome</keyword>
<name>YCF68_ORYNI</name>